<proteinExistence type="inferred from homology"/>
<reference key="1">
    <citation type="journal article" date="2002" name="Nature">
        <title>Genome sequence of the plant pathogen Ralstonia solanacearum.</title>
        <authorList>
            <person name="Salanoubat M."/>
            <person name="Genin S."/>
            <person name="Artiguenave F."/>
            <person name="Gouzy J."/>
            <person name="Mangenot S."/>
            <person name="Arlat M."/>
            <person name="Billault A."/>
            <person name="Brottier P."/>
            <person name="Camus J.-C."/>
            <person name="Cattolico L."/>
            <person name="Chandler M."/>
            <person name="Choisne N."/>
            <person name="Claudel-Renard C."/>
            <person name="Cunnac S."/>
            <person name="Demange N."/>
            <person name="Gaspin C."/>
            <person name="Lavie M."/>
            <person name="Moisan A."/>
            <person name="Robert C."/>
            <person name="Saurin W."/>
            <person name="Schiex T."/>
            <person name="Siguier P."/>
            <person name="Thebault P."/>
            <person name="Whalen M."/>
            <person name="Wincker P."/>
            <person name="Levy M."/>
            <person name="Weissenbach J."/>
            <person name="Boucher C.A."/>
        </authorList>
    </citation>
    <scope>NUCLEOTIDE SEQUENCE [LARGE SCALE GENOMIC DNA]</scope>
    <source>
        <strain>ATCC BAA-1114 / GMI1000</strain>
    </source>
</reference>
<feature type="chain" id="PRO_0000192757" description="Bifunctional uridylyltransferase/uridylyl-removing enzyme">
    <location>
        <begin position="1"/>
        <end position="861"/>
    </location>
</feature>
<feature type="domain" description="HD" evidence="2">
    <location>
        <begin position="441"/>
        <end position="557"/>
    </location>
</feature>
<feature type="domain" description="ACT 1" evidence="1">
    <location>
        <begin position="680"/>
        <end position="763"/>
    </location>
</feature>
<feature type="domain" description="ACT 2" evidence="1">
    <location>
        <begin position="792"/>
        <end position="861"/>
    </location>
</feature>
<feature type="region of interest" description="Uridylyltransferase">
    <location>
        <begin position="1"/>
        <end position="322"/>
    </location>
</feature>
<feature type="region of interest" description="Uridylyl-removing">
    <location>
        <begin position="323"/>
        <end position="679"/>
    </location>
</feature>
<comment type="function">
    <text evidence="1">Modifies, by uridylylation and deuridylylation, the PII regulatory proteins (GlnB and homologs), in response to the nitrogen status of the cell that GlnD senses through the glutamine level. Under low glutamine levels, catalyzes the conversion of the PII proteins and UTP to PII-UMP and PPi, while under higher glutamine levels, GlnD hydrolyzes PII-UMP to PII and UMP (deuridylylation). Thus, controls uridylylation state and activity of the PII proteins, and plays an important role in the regulation of nitrogen assimilation and metabolism.</text>
</comment>
<comment type="catalytic activity">
    <reaction evidence="1">
        <text>[protein-PII]-L-tyrosine + UTP = [protein-PII]-uridylyl-L-tyrosine + diphosphate</text>
        <dbReference type="Rhea" id="RHEA:13673"/>
        <dbReference type="Rhea" id="RHEA-COMP:12147"/>
        <dbReference type="Rhea" id="RHEA-COMP:12148"/>
        <dbReference type="ChEBI" id="CHEBI:33019"/>
        <dbReference type="ChEBI" id="CHEBI:46398"/>
        <dbReference type="ChEBI" id="CHEBI:46858"/>
        <dbReference type="ChEBI" id="CHEBI:90602"/>
        <dbReference type="EC" id="2.7.7.59"/>
    </reaction>
</comment>
<comment type="catalytic activity">
    <reaction evidence="1">
        <text>[protein-PII]-uridylyl-L-tyrosine + H2O = [protein-PII]-L-tyrosine + UMP + H(+)</text>
        <dbReference type="Rhea" id="RHEA:48600"/>
        <dbReference type="Rhea" id="RHEA-COMP:12147"/>
        <dbReference type="Rhea" id="RHEA-COMP:12148"/>
        <dbReference type="ChEBI" id="CHEBI:15377"/>
        <dbReference type="ChEBI" id="CHEBI:15378"/>
        <dbReference type="ChEBI" id="CHEBI:46858"/>
        <dbReference type="ChEBI" id="CHEBI:57865"/>
        <dbReference type="ChEBI" id="CHEBI:90602"/>
    </reaction>
</comment>
<comment type="cofactor">
    <cofactor evidence="1">
        <name>Mg(2+)</name>
        <dbReference type="ChEBI" id="CHEBI:18420"/>
    </cofactor>
</comment>
<comment type="activity regulation">
    <text evidence="1">Uridylyltransferase (UTase) activity is inhibited by glutamine, while glutamine activates uridylyl-removing (UR) activity.</text>
</comment>
<comment type="domain">
    <text evidence="1">Has four distinct domains: an N-terminal nucleotidyltransferase (NT) domain responsible for UTase activity, a central HD domain that encodes UR activity, and two C-terminal ACT domains that seem to have a role in glutamine sensing.</text>
</comment>
<comment type="similarity">
    <text evidence="1">Belongs to the GlnD family.</text>
</comment>
<organism>
    <name type="scientific">Ralstonia nicotianae (strain ATCC BAA-1114 / GMI1000)</name>
    <name type="common">Ralstonia solanacearum</name>
    <dbReference type="NCBI Taxonomy" id="267608"/>
    <lineage>
        <taxon>Bacteria</taxon>
        <taxon>Pseudomonadati</taxon>
        <taxon>Pseudomonadota</taxon>
        <taxon>Betaproteobacteria</taxon>
        <taxon>Burkholderiales</taxon>
        <taxon>Burkholderiaceae</taxon>
        <taxon>Ralstonia</taxon>
        <taxon>Ralstonia solanacearum species complex</taxon>
    </lineage>
</organism>
<dbReference type="EC" id="2.7.7.59" evidence="1"/>
<dbReference type="EC" id="3.1.4.-" evidence="1"/>
<dbReference type="EMBL" id="AL646052">
    <property type="protein sequence ID" value="CAD15104.1"/>
    <property type="molecule type" value="Genomic_DNA"/>
</dbReference>
<dbReference type="RefSeq" id="WP_011001351.1">
    <property type="nucleotide sequence ID" value="NC_003295.1"/>
</dbReference>
<dbReference type="SMR" id="Q8XZJ3"/>
<dbReference type="STRING" id="267608.RSc1402"/>
<dbReference type="EnsemblBacteria" id="CAD15104">
    <property type="protein sequence ID" value="CAD15104"/>
    <property type="gene ID" value="RSc1402"/>
</dbReference>
<dbReference type="KEGG" id="rso:RSc1402"/>
<dbReference type="PATRIC" id="fig|267608.8.peg.1432"/>
<dbReference type="eggNOG" id="COG2844">
    <property type="taxonomic scope" value="Bacteria"/>
</dbReference>
<dbReference type="HOGENOM" id="CLU_012833_0_0_4"/>
<dbReference type="Proteomes" id="UP000001436">
    <property type="component" value="Chromosome"/>
</dbReference>
<dbReference type="GO" id="GO:0008773">
    <property type="term" value="F:[protein-PII] uridylyltransferase activity"/>
    <property type="evidence" value="ECO:0007669"/>
    <property type="project" value="UniProtKB-UniRule"/>
</dbReference>
<dbReference type="GO" id="GO:0008081">
    <property type="term" value="F:phosphoric diester hydrolase activity"/>
    <property type="evidence" value="ECO:0007669"/>
    <property type="project" value="UniProtKB-UniRule"/>
</dbReference>
<dbReference type="GO" id="GO:0006808">
    <property type="term" value="P:regulation of nitrogen utilization"/>
    <property type="evidence" value="ECO:0007669"/>
    <property type="project" value="UniProtKB-UniRule"/>
</dbReference>
<dbReference type="CDD" id="cd04899">
    <property type="entry name" value="ACT_ACR-UUR-like_2"/>
    <property type="match status" value="1"/>
</dbReference>
<dbReference type="CDD" id="cd04900">
    <property type="entry name" value="ACT_UUR-like_1"/>
    <property type="match status" value="1"/>
</dbReference>
<dbReference type="CDD" id="cd00077">
    <property type="entry name" value="HDc"/>
    <property type="match status" value="1"/>
</dbReference>
<dbReference type="CDD" id="cd05401">
    <property type="entry name" value="NT_GlnE_GlnD_like"/>
    <property type="match status" value="1"/>
</dbReference>
<dbReference type="Gene3D" id="3.30.70.260">
    <property type="match status" value="1"/>
</dbReference>
<dbReference type="Gene3D" id="1.10.3210.10">
    <property type="entry name" value="Hypothetical protein af1432"/>
    <property type="match status" value="1"/>
</dbReference>
<dbReference type="HAMAP" id="MF_00277">
    <property type="entry name" value="PII_uridylyl_transf"/>
    <property type="match status" value="1"/>
</dbReference>
<dbReference type="InterPro" id="IPR045865">
    <property type="entry name" value="ACT-like_dom_sf"/>
</dbReference>
<dbReference type="InterPro" id="IPR002912">
    <property type="entry name" value="ACT_dom"/>
</dbReference>
<dbReference type="InterPro" id="IPR003607">
    <property type="entry name" value="HD/PDEase_dom"/>
</dbReference>
<dbReference type="InterPro" id="IPR006674">
    <property type="entry name" value="HD_domain"/>
</dbReference>
<dbReference type="InterPro" id="IPR043519">
    <property type="entry name" value="NT_sf"/>
</dbReference>
<dbReference type="InterPro" id="IPR013546">
    <property type="entry name" value="PII_UdlTrfase/GS_AdlTrfase"/>
</dbReference>
<dbReference type="InterPro" id="IPR002934">
    <property type="entry name" value="Polymerase_NTP_transf_dom"/>
</dbReference>
<dbReference type="InterPro" id="IPR010043">
    <property type="entry name" value="UTase/UR"/>
</dbReference>
<dbReference type="NCBIfam" id="NF002837">
    <property type="entry name" value="PRK03059.1"/>
    <property type="match status" value="1"/>
</dbReference>
<dbReference type="NCBIfam" id="TIGR01693">
    <property type="entry name" value="UTase_glnD"/>
    <property type="match status" value="1"/>
</dbReference>
<dbReference type="PANTHER" id="PTHR47320">
    <property type="entry name" value="BIFUNCTIONAL URIDYLYLTRANSFERASE/URIDYLYL-REMOVING ENZYME"/>
    <property type="match status" value="1"/>
</dbReference>
<dbReference type="PANTHER" id="PTHR47320:SF1">
    <property type="entry name" value="BIFUNCTIONAL URIDYLYLTRANSFERASE_URIDYLYL-REMOVING ENZYME"/>
    <property type="match status" value="1"/>
</dbReference>
<dbReference type="Pfam" id="PF08335">
    <property type="entry name" value="GlnD_UR_UTase"/>
    <property type="match status" value="1"/>
</dbReference>
<dbReference type="Pfam" id="PF01966">
    <property type="entry name" value="HD"/>
    <property type="match status" value="1"/>
</dbReference>
<dbReference type="Pfam" id="PF01909">
    <property type="entry name" value="NTP_transf_2"/>
    <property type="match status" value="1"/>
</dbReference>
<dbReference type="PIRSF" id="PIRSF006288">
    <property type="entry name" value="PII_uridyltransf"/>
    <property type="match status" value="1"/>
</dbReference>
<dbReference type="SMART" id="SM00471">
    <property type="entry name" value="HDc"/>
    <property type="match status" value="1"/>
</dbReference>
<dbReference type="SUPFAM" id="SSF55021">
    <property type="entry name" value="ACT-like"/>
    <property type="match status" value="2"/>
</dbReference>
<dbReference type="SUPFAM" id="SSF109604">
    <property type="entry name" value="HD-domain/PDEase-like"/>
    <property type="match status" value="1"/>
</dbReference>
<dbReference type="SUPFAM" id="SSF81301">
    <property type="entry name" value="Nucleotidyltransferase"/>
    <property type="match status" value="1"/>
</dbReference>
<dbReference type="SUPFAM" id="SSF81593">
    <property type="entry name" value="Nucleotidyltransferase substrate binding subunit/domain"/>
    <property type="match status" value="1"/>
</dbReference>
<dbReference type="PROSITE" id="PS51671">
    <property type="entry name" value="ACT"/>
    <property type="match status" value="2"/>
</dbReference>
<dbReference type="PROSITE" id="PS51831">
    <property type="entry name" value="HD"/>
    <property type="match status" value="1"/>
</dbReference>
<gene>
    <name evidence="1" type="primary">glnD</name>
    <name type="ordered locus">RSc1402</name>
    <name type="ORF">RS05290</name>
</gene>
<protein>
    <recommendedName>
        <fullName evidence="1">Bifunctional uridylyltransferase/uridylyl-removing enzyme</fullName>
        <shortName evidence="1">UTase/UR</shortName>
    </recommendedName>
    <alternativeName>
        <fullName evidence="1">Bifunctional [protein-PII] modification enzyme</fullName>
    </alternativeName>
    <alternativeName>
        <fullName evidence="1">Bifunctional nitrogen sensor protein</fullName>
    </alternativeName>
    <domain>
        <recommendedName>
            <fullName evidence="1">[Protein-PII] uridylyltransferase</fullName>
            <shortName evidence="1">PII uridylyltransferase</shortName>
            <shortName evidence="1">UTase</shortName>
            <ecNumber evidence="1">2.7.7.59</ecNumber>
        </recommendedName>
    </domain>
    <domain>
        <recommendedName>
            <fullName evidence="1">[Protein-PII]-UMP uridylyl-removing enzyme</fullName>
            <shortName evidence="1">UR</shortName>
            <ecNumber evidence="1">3.1.4.-</ecNumber>
        </recommendedName>
    </domain>
</protein>
<keyword id="KW-0378">Hydrolase</keyword>
<keyword id="KW-0460">Magnesium</keyword>
<keyword id="KW-0511">Multifunctional enzyme</keyword>
<keyword id="KW-0548">Nucleotidyltransferase</keyword>
<keyword id="KW-1185">Reference proteome</keyword>
<keyword id="KW-0677">Repeat</keyword>
<keyword id="KW-0808">Transferase</keyword>
<accession>Q8XZJ3</accession>
<evidence type="ECO:0000255" key="1">
    <source>
        <dbReference type="HAMAP-Rule" id="MF_00277"/>
    </source>
</evidence>
<evidence type="ECO:0000255" key="2">
    <source>
        <dbReference type="PROSITE-ProRule" id="PRU01175"/>
    </source>
</evidence>
<name>GLND_RALN1</name>
<sequence>MHTAAAATPATSPRDILKAERAHLFAQFEQHANVNLLVTKLARAVDQALILLWQDEGMPDTCALVAVGGYGRGELFPHSDVDILLLLPQTADKALETRLEAFIGHCWDMGLDIGSSVRTVDECISEATQDVTVCTSLLEARLLTGDEGLYRTFETHYQGHLDAADFYQSKMLEMRQRHAKYQDTPYSLEPNCKESPGGLRDLQVILWMTRAAGFGSSWNELLVNQLLTRREAKELAANERLLKTIRARLHLLAGRRQDVLVFDLQTQLGEAFGYRPNAAKRTSEQLMRRYYWAAKAVTQLNTVVLQNIEARLFPTELGITRTINGRFVERQGMLEIADPELYQREPAAILETFLVYEQTRGVKGLAANTLRALYNARTQMDARWRRDPANRATFLSILQQPQGITHALRLMNQTSVLGRYLVNFRRIVGQMQHDLFHVYTVDQHILMVVRNVRRFAIVEHAHEFPFCSQLMANFDKPWVLTVAALFHDIAKGRGGDHSVLGMADARRFCKQHGIASEDADLIVWLVEHHLTMSQVAQKQDLGDPEVIRHFADQVGSERYLSALYLLTVADIRGTSPKVWNAWKAKLLEDLYRITLRVLGGATTDPHAVLEGRKEEARVLLRLAAMDPHAHEALWAQLDVGVFLRHDARDIAWFTRHFYNRVDTTLPIVRARISPVGEGLQVAVYSPDRPDLFARICGYFERKGLTILDAKIHTTKHGYALDTFQVADPGSGLVEPGHYRDIITLVEHELAELIARETVLAEPPRGRISRQSRSFPIKPRVDLRPDERGQYYLLSLSATDRTGLLYAIARVLARHRVSVHTARINTLGERVEDVFLLDGRRLTQDNKLQLALESELLEALAI</sequence>